<reference key="1">
    <citation type="submission" date="2007-02" db="EMBL/GenBank/DDBJ databases">
        <title>Complete sequence of chromosome 1 of Rhodobacter sphaeroides ATCC 17029.</title>
        <authorList>
            <person name="Copeland A."/>
            <person name="Lucas S."/>
            <person name="Lapidus A."/>
            <person name="Barry K."/>
            <person name="Detter J.C."/>
            <person name="Glavina del Rio T."/>
            <person name="Hammon N."/>
            <person name="Israni S."/>
            <person name="Dalin E."/>
            <person name="Tice H."/>
            <person name="Pitluck S."/>
            <person name="Kiss H."/>
            <person name="Brettin T."/>
            <person name="Bruce D."/>
            <person name="Han C."/>
            <person name="Tapia R."/>
            <person name="Gilna P."/>
            <person name="Schmutz J."/>
            <person name="Larimer F."/>
            <person name="Land M."/>
            <person name="Hauser L."/>
            <person name="Kyrpides N."/>
            <person name="Mikhailova N."/>
            <person name="Richardson P."/>
            <person name="Mackenzie C."/>
            <person name="Choudhary M."/>
            <person name="Donohue T.J."/>
            <person name="Kaplan S."/>
        </authorList>
    </citation>
    <scope>NUCLEOTIDE SEQUENCE [LARGE SCALE GENOMIC DNA]</scope>
    <source>
        <strain>ATCC 17029 / ATH 2.4.9</strain>
    </source>
</reference>
<keyword id="KW-0963">Cytoplasm</keyword>
<keyword id="KW-0489">Methyltransferase</keyword>
<keyword id="KW-0694">RNA-binding</keyword>
<keyword id="KW-0698">rRNA processing</keyword>
<keyword id="KW-0949">S-adenosyl-L-methionine</keyword>
<keyword id="KW-0808">Transferase</keyword>
<feature type="chain" id="PRO_1000056659" description="Ribosomal RNA small subunit methyltransferase A">
    <location>
        <begin position="1"/>
        <end position="278"/>
    </location>
</feature>
<feature type="binding site" evidence="1">
    <location>
        <position position="28"/>
    </location>
    <ligand>
        <name>S-adenosyl-L-methionine</name>
        <dbReference type="ChEBI" id="CHEBI:59789"/>
    </ligand>
</feature>
<feature type="binding site" evidence="1">
    <location>
        <position position="30"/>
    </location>
    <ligand>
        <name>S-adenosyl-L-methionine</name>
        <dbReference type="ChEBI" id="CHEBI:59789"/>
    </ligand>
</feature>
<feature type="binding site" evidence="1">
    <location>
        <position position="55"/>
    </location>
    <ligand>
        <name>S-adenosyl-L-methionine</name>
        <dbReference type="ChEBI" id="CHEBI:59789"/>
    </ligand>
</feature>
<feature type="binding site" evidence="1">
    <location>
        <position position="77"/>
    </location>
    <ligand>
        <name>S-adenosyl-L-methionine</name>
        <dbReference type="ChEBI" id="CHEBI:59789"/>
    </ligand>
</feature>
<feature type="binding site" evidence="1">
    <location>
        <position position="103"/>
    </location>
    <ligand>
        <name>S-adenosyl-L-methionine</name>
        <dbReference type="ChEBI" id="CHEBI:59789"/>
    </ligand>
</feature>
<feature type="binding site" evidence="1">
    <location>
        <position position="122"/>
    </location>
    <ligand>
        <name>S-adenosyl-L-methionine</name>
        <dbReference type="ChEBI" id="CHEBI:59789"/>
    </ligand>
</feature>
<gene>
    <name evidence="1" type="primary">rsmA</name>
    <name evidence="1" type="synonym">ksgA</name>
    <name type="ordered locus">Rsph17029_1549</name>
</gene>
<proteinExistence type="inferred from homology"/>
<organism>
    <name type="scientific">Cereibacter sphaeroides (strain ATCC 17029 / ATH 2.4.9)</name>
    <name type="common">Rhodobacter sphaeroides</name>
    <dbReference type="NCBI Taxonomy" id="349101"/>
    <lineage>
        <taxon>Bacteria</taxon>
        <taxon>Pseudomonadati</taxon>
        <taxon>Pseudomonadota</taxon>
        <taxon>Alphaproteobacteria</taxon>
        <taxon>Rhodobacterales</taxon>
        <taxon>Paracoccaceae</taxon>
        <taxon>Cereibacter</taxon>
    </lineage>
</organism>
<accession>A3PJZ3</accession>
<comment type="function">
    <text evidence="1">Specifically dimethylates two adjacent adenosines (A1518 and A1519) in the loop of a conserved hairpin near the 3'-end of 16S rRNA in the 30S particle. May play a critical role in biogenesis of 30S subunits.</text>
</comment>
<comment type="catalytic activity">
    <reaction evidence="1">
        <text>adenosine(1518)/adenosine(1519) in 16S rRNA + 4 S-adenosyl-L-methionine = N(6)-dimethyladenosine(1518)/N(6)-dimethyladenosine(1519) in 16S rRNA + 4 S-adenosyl-L-homocysteine + 4 H(+)</text>
        <dbReference type="Rhea" id="RHEA:19609"/>
        <dbReference type="Rhea" id="RHEA-COMP:10232"/>
        <dbReference type="Rhea" id="RHEA-COMP:10233"/>
        <dbReference type="ChEBI" id="CHEBI:15378"/>
        <dbReference type="ChEBI" id="CHEBI:57856"/>
        <dbReference type="ChEBI" id="CHEBI:59789"/>
        <dbReference type="ChEBI" id="CHEBI:74411"/>
        <dbReference type="ChEBI" id="CHEBI:74493"/>
        <dbReference type="EC" id="2.1.1.182"/>
    </reaction>
</comment>
<comment type="subcellular location">
    <subcellularLocation>
        <location evidence="1">Cytoplasm</location>
    </subcellularLocation>
</comment>
<comment type="similarity">
    <text evidence="1">Belongs to the class I-like SAM-binding methyltransferase superfamily. rRNA adenine N(6)-methyltransferase family. RsmA subfamily.</text>
</comment>
<evidence type="ECO:0000255" key="1">
    <source>
        <dbReference type="HAMAP-Rule" id="MF_00607"/>
    </source>
</evidence>
<dbReference type="EC" id="2.1.1.182" evidence="1"/>
<dbReference type="EMBL" id="CP000577">
    <property type="protein sequence ID" value="ABN76659.1"/>
    <property type="molecule type" value="Genomic_DNA"/>
</dbReference>
<dbReference type="RefSeq" id="WP_011841092.1">
    <property type="nucleotide sequence ID" value="NC_009049.1"/>
</dbReference>
<dbReference type="SMR" id="A3PJZ3"/>
<dbReference type="KEGG" id="rsh:Rsph17029_1549"/>
<dbReference type="HOGENOM" id="CLU_041220_0_1_5"/>
<dbReference type="GO" id="GO:0005829">
    <property type="term" value="C:cytosol"/>
    <property type="evidence" value="ECO:0007669"/>
    <property type="project" value="TreeGrafter"/>
</dbReference>
<dbReference type="GO" id="GO:0052908">
    <property type="term" value="F:16S rRNA (adenine(1518)-N(6)/adenine(1519)-N(6))-dimethyltransferase activity"/>
    <property type="evidence" value="ECO:0007669"/>
    <property type="project" value="UniProtKB-EC"/>
</dbReference>
<dbReference type="GO" id="GO:0003723">
    <property type="term" value="F:RNA binding"/>
    <property type="evidence" value="ECO:0007669"/>
    <property type="project" value="UniProtKB-KW"/>
</dbReference>
<dbReference type="CDD" id="cd02440">
    <property type="entry name" value="AdoMet_MTases"/>
    <property type="match status" value="1"/>
</dbReference>
<dbReference type="FunFam" id="1.10.8.100:FF:000001">
    <property type="entry name" value="Ribosomal RNA small subunit methyltransferase A"/>
    <property type="match status" value="1"/>
</dbReference>
<dbReference type="Gene3D" id="1.10.8.100">
    <property type="entry name" value="Ribosomal RNA adenine dimethylase-like, domain 2"/>
    <property type="match status" value="1"/>
</dbReference>
<dbReference type="Gene3D" id="3.40.50.150">
    <property type="entry name" value="Vaccinia Virus protein VP39"/>
    <property type="match status" value="1"/>
</dbReference>
<dbReference type="HAMAP" id="MF_00607">
    <property type="entry name" value="16SrRNA_methyltr_A"/>
    <property type="match status" value="1"/>
</dbReference>
<dbReference type="InterPro" id="IPR001737">
    <property type="entry name" value="KsgA/Erm"/>
</dbReference>
<dbReference type="InterPro" id="IPR023165">
    <property type="entry name" value="rRNA_Ade_diMease-like_C"/>
</dbReference>
<dbReference type="InterPro" id="IPR020596">
    <property type="entry name" value="rRNA_Ade_Mease_Trfase_CS"/>
</dbReference>
<dbReference type="InterPro" id="IPR020598">
    <property type="entry name" value="rRNA_Ade_methylase_Trfase_N"/>
</dbReference>
<dbReference type="InterPro" id="IPR011530">
    <property type="entry name" value="rRNA_adenine_dimethylase"/>
</dbReference>
<dbReference type="InterPro" id="IPR029063">
    <property type="entry name" value="SAM-dependent_MTases_sf"/>
</dbReference>
<dbReference type="NCBIfam" id="TIGR00755">
    <property type="entry name" value="ksgA"/>
    <property type="match status" value="1"/>
</dbReference>
<dbReference type="PANTHER" id="PTHR11727">
    <property type="entry name" value="DIMETHYLADENOSINE TRANSFERASE"/>
    <property type="match status" value="1"/>
</dbReference>
<dbReference type="PANTHER" id="PTHR11727:SF7">
    <property type="entry name" value="DIMETHYLADENOSINE TRANSFERASE-RELATED"/>
    <property type="match status" value="1"/>
</dbReference>
<dbReference type="Pfam" id="PF00398">
    <property type="entry name" value="RrnaAD"/>
    <property type="match status" value="1"/>
</dbReference>
<dbReference type="SMART" id="SM00650">
    <property type="entry name" value="rADc"/>
    <property type="match status" value="1"/>
</dbReference>
<dbReference type="SUPFAM" id="SSF53335">
    <property type="entry name" value="S-adenosyl-L-methionine-dependent methyltransferases"/>
    <property type="match status" value="1"/>
</dbReference>
<dbReference type="PROSITE" id="PS01131">
    <property type="entry name" value="RRNA_A_DIMETH"/>
    <property type="match status" value="1"/>
</dbReference>
<dbReference type="PROSITE" id="PS51689">
    <property type="entry name" value="SAM_RNA_A_N6_MT"/>
    <property type="match status" value="1"/>
</dbReference>
<sequence length="278" mass="30302">MASIDGLPPLREVIRAHGLSAKRQLGQNFLLDLNLTAKIARLAGDLTNSDVLEVGPGPGGLTRGLLAEGARRVLAIEKDARCLPALAEVAAAWPGRLEVLNADALEVDVAARLTPPIRIVANLPYNVGTELLTRWLSSDWPPFWESLTLMFQKEVAERIVAKPGSKAYGRLALLSQWRTDPKIVLTLPPDAFTPPPSIHSAVVHFTRLEAPRHPADPKVLARVTAMAFNQRRKMLRSSLKGLVPDIETVLREAGIEPTQRAEEIPLEGFCALARRLAG</sequence>
<protein>
    <recommendedName>
        <fullName evidence="1">Ribosomal RNA small subunit methyltransferase A</fullName>
        <ecNumber evidence="1">2.1.1.182</ecNumber>
    </recommendedName>
    <alternativeName>
        <fullName evidence="1">16S rRNA (adenine(1518)-N(6)/adenine(1519)-N(6))-dimethyltransferase</fullName>
    </alternativeName>
    <alternativeName>
        <fullName evidence="1">16S rRNA dimethyladenosine transferase</fullName>
    </alternativeName>
    <alternativeName>
        <fullName evidence="1">16S rRNA dimethylase</fullName>
    </alternativeName>
    <alternativeName>
        <fullName evidence="1">S-adenosylmethionine-6-N', N'-adenosyl(rRNA) dimethyltransferase</fullName>
    </alternativeName>
</protein>
<name>RSMA_CERS1</name>